<comment type="similarity">
    <text evidence="1">Belongs to the SlyX family.</text>
</comment>
<reference key="1">
    <citation type="journal article" date="2005" name="Nucleic Acids Res.">
        <title>Genome dynamics and diversity of Shigella species, the etiologic agents of bacillary dysentery.</title>
        <authorList>
            <person name="Yang F."/>
            <person name="Yang J."/>
            <person name="Zhang X."/>
            <person name="Chen L."/>
            <person name="Jiang Y."/>
            <person name="Yan Y."/>
            <person name="Tang X."/>
            <person name="Wang J."/>
            <person name="Xiong Z."/>
            <person name="Dong J."/>
            <person name="Xue Y."/>
            <person name="Zhu Y."/>
            <person name="Xu X."/>
            <person name="Sun L."/>
            <person name="Chen S."/>
            <person name="Nie H."/>
            <person name="Peng J."/>
            <person name="Xu J."/>
            <person name="Wang Y."/>
            <person name="Yuan Z."/>
            <person name="Wen Y."/>
            <person name="Yao Z."/>
            <person name="Shen Y."/>
            <person name="Qiang B."/>
            <person name="Hou Y."/>
            <person name="Yu J."/>
            <person name="Jin Q."/>
        </authorList>
    </citation>
    <scope>NUCLEOTIDE SEQUENCE [LARGE SCALE GENOMIC DNA]</scope>
    <source>
        <strain>Ss046</strain>
    </source>
</reference>
<sequence>MQDLSLEARLAELESRLAFQEITIEELNVTVTAHEMEMAKLRDHLRLLTEKLKASQPSNIASQAEETPPPHY</sequence>
<accession>Q3YWS4</accession>
<evidence type="ECO:0000255" key="1">
    <source>
        <dbReference type="HAMAP-Rule" id="MF_00715"/>
    </source>
</evidence>
<evidence type="ECO:0000256" key="2">
    <source>
        <dbReference type="SAM" id="MobiDB-lite"/>
    </source>
</evidence>
<name>SLYX_SHISS</name>
<protein>
    <recommendedName>
        <fullName evidence="1">Protein SlyX</fullName>
    </recommendedName>
</protein>
<proteinExistence type="inferred from homology"/>
<gene>
    <name evidence="1" type="primary">slyX</name>
    <name type="ordered locus">SSON_3478</name>
</gene>
<dbReference type="EMBL" id="CP000038">
    <property type="protein sequence ID" value="AAZ90038.1"/>
    <property type="molecule type" value="Genomic_DNA"/>
</dbReference>
<dbReference type="RefSeq" id="WP_001153615.1">
    <property type="nucleotide sequence ID" value="NC_007384.1"/>
</dbReference>
<dbReference type="SMR" id="Q3YWS4"/>
<dbReference type="KEGG" id="ssn:SSON_3478"/>
<dbReference type="HOGENOM" id="CLU_180796_4_2_6"/>
<dbReference type="Proteomes" id="UP000002529">
    <property type="component" value="Chromosome"/>
</dbReference>
<dbReference type="Gene3D" id="1.20.5.300">
    <property type="match status" value="1"/>
</dbReference>
<dbReference type="HAMAP" id="MF_00715">
    <property type="entry name" value="SlyX"/>
    <property type="match status" value="1"/>
</dbReference>
<dbReference type="InterPro" id="IPR007236">
    <property type="entry name" value="SlyX"/>
</dbReference>
<dbReference type="NCBIfam" id="NF002750">
    <property type="entry name" value="PRK02793.1"/>
    <property type="match status" value="1"/>
</dbReference>
<dbReference type="PANTHER" id="PTHR36508">
    <property type="entry name" value="PROTEIN SLYX"/>
    <property type="match status" value="1"/>
</dbReference>
<dbReference type="PANTHER" id="PTHR36508:SF1">
    <property type="entry name" value="PROTEIN SLYX"/>
    <property type="match status" value="1"/>
</dbReference>
<dbReference type="Pfam" id="PF04102">
    <property type="entry name" value="SlyX"/>
    <property type="match status" value="1"/>
</dbReference>
<feature type="chain" id="PRO_0000227084" description="Protein SlyX">
    <location>
        <begin position="1"/>
        <end position="72"/>
    </location>
</feature>
<feature type="region of interest" description="Disordered" evidence="2">
    <location>
        <begin position="52"/>
        <end position="72"/>
    </location>
</feature>
<feature type="compositionally biased region" description="Polar residues" evidence="2">
    <location>
        <begin position="55"/>
        <end position="65"/>
    </location>
</feature>
<organism>
    <name type="scientific">Shigella sonnei (strain Ss046)</name>
    <dbReference type="NCBI Taxonomy" id="300269"/>
    <lineage>
        <taxon>Bacteria</taxon>
        <taxon>Pseudomonadati</taxon>
        <taxon>Pseudomonadota</taxon>
        <taxon>Gammaproteobacteria</taxon>
        <taxon>Enterobacterales</taxon>
        <taxon>Enterobacteriaceae</taxon>
        <taxon>Shigella</taxon>
    </lineage>
</organism>
<keyword id="KW-1185">Reference proteome</keyword>